<reference key="1">
    <citation type="journal article" date="2005" name="Nat. Biotechnol.">
        <title>The genome sequence of the ethanologenic bacterium Zymomonas mobilis ZM4.</title>
        <authorList>
            <person name="Seo J.-S."/>
            <person name="Chong H."/>
            <person name="Park H.S."/>
            <person name="Yoon K.-O."/>
            <person name="Jung C."/>
            <person name="Kim J.J."/>
            <person name="Hong J.H."/>
            <person name="Kim H."/>
            <person name="Kim J.-H."/>
            <person name="Kil J.-I."/>
            <person name="Park C.J."/>
            <person name="Oh H.-M."/>
            <person name="Lee J.-S."/>
            <person name="Jin S.-J."/>
            <person name="Um H.-W."/>
            <person name="Lee H.-J."/>
            <person name="Oh S.-J."/>
            <person name="Kim J.Y."/>
            <person name="Kang H.L."/>
            <person name="Lee S.Y."/>
            <person name="Lee K.J."/>
            <person name="Kang H.S."/>
        </authorList>
    </citation>
    <scope>NUCLEOTIDE SEQUENCE [LARGE SCALE GENOMIC DNA]</scope>
    <source>
        <strain>ATCC 31821 / ZM4 / CP4</strain>
    </source>
</reference>
<proteinExistence type="inferred from homology"/>
<sequence>MTFSFHKMHGLGNDFIVLDARKNPIQMNPALAQALSNRHTGIGCDQLIIIGNGKNQADVSMEIWNADGSEVEACGNATRCVPVFLGRDVIISTAAGLLDARLSDEGACVDMGRPRLSWDEIPLAYAMDTLSMPVAWEDLKEPTAVNMGNPHVVFVVDDVDAVDFGRLGNMIEHDQLFPERINVNIVMVTGKDHLKMRTWERGAGLTRACGTGACATFVAAKRRRLVSGKTQIDLPGGRLVLDENSEGHIIMRGPATYVFKGEADWASFS</sequence>
<comment type="function">
    <text evidence="1">Catalyzes the stereoinversion of LL-2,6-diaminopimelate (L,L-DAP) to meso-diaminopimelate (meso-DAP), a precursor of L-lysine and an essential component of the bacterial peptidoglycan.</text>
</comment>
<comment type="catalytic activity">
    <reaction evidence="1">
        <text>(2S,6S)-2,6-diaminopimelate = meso-2,6-diaminopimelate</text>
        <dbReference type="Rhea" id="RHEA:15393"/>
        <dbReference type="ChEBI" id="CHEBI:57609"/>
        <dbReference type="ChEBI" id="CHEBI:57791"/>
        <dbReference type="EC" id="5.1.1.7"/>
    </reaction>
</comment>
<comment type="pathway">
    <text evidence="1">Amino-acid biosynthesis; L-lysine biosynthesis via DAP pathway; DL-2,6-diaminopimelate from LL-2,6-diaminopimelate: step 1/1.</text>
</comment>
<comment type="subunit">
    <text evidence="1">Homodimer.</text>
</comment>
<comment type="subcellular location">
    <subcellularLocation>
        <location evidence="1">Cytoplasm</location>
    </subcellularLocation>
</comment>
<comment type="similarity">
    <text evidence="1">Belongs to the diaminopimelate epimerase family.</text>
</comment>
<dbReference type="EC" id="5.1.1.7" evidence="1"/>
<dbReference type="EMBL" id="AE008692">
    <property type="protein sequence ID" value="AAV89696.1"/>
    <property type="molecule type" value="Genomic_DNA"/>
</dbReference>
<dbReference type="RefSeq" id="WP_011240909.1">
    <property type="nucleotide sequence ID" value="NC_006526.2"/>
</dbReference>
<dbReference type="SMR" id="Q5NNL4"/>
<dbReference type="STRING" id="264203.ZMO1072"/>
<dbReference type="KEGG" id="zmo:ZMO1072"/>
<dbReference type="eggNOG" id="COG0253">
    <property type="taxonomic scope" value="Bacteria"/>
</dbReference>
<dbReference type="HOGENOM" id="CLU_053306_1_0_5"/>
<dbReference type="UniPathway" id="UPA00034">
    <property type="reaction ID" value="UER00025"/>
</dbReference>
<dbReference type="Proteomes" id="UP000001173">
    <property type="component" value="Chromosome"/>
</dbReference>
<dbReference type="GO" id="GO:0005829">
    <property type="term" value="C:cytosol"/>
    <property type="evidence" value="ECO:0007669"/>
    <property type="project" value="TreeGrafter"/>
</dbReference>
<dbReference type="GO" id="GO:0008837">
    <property type="term" value="F:diaminopimelate epimerase activity"/>
    <property type="evidence" value="ECO:0007669"/>
    <property type="project" value="UniProtKB-UniRule"/>
</dbReference>
<dbReference type="GO" id="GO:0009089">
    <property type="term" value="P:lysine biosynthetic process via diaminopimelate"/>
    <property type="evidence" value="ECO:0007669"/>
    <property type="project" value="UniProtKB-UniRule"/>
</dbReference>
<dbReference type="Gene3D" id="3.10.310.10">
    <property type="entry name" value="Diaminopimelate Epimerase, Chain A, domain 1"/>
    <property type="match status" value="2"/>
</dbReference>
<dbReference type="HAMAP" id="MF_00197">
    <property type="entry name" value="DAP_epimerase"/>
    <property type="match status" value="1"/>
</dbReference>
<dbReference type="InterPro" id="IPR018510">
    <property type="entry name" value="DAP_epimerase_AS"/>
</dbReference>
<dbReference type="InterPro" id="IPR001653">
    <property type="entry name" value="DAP_epimerase_DapF"/>
</dbReference>
<dbReference type="NCBIfam" id="TIGR00652">
    <property type="entry name" value="DapF"/>
    <property type="match status" value="1"/>
</dbReference>
<dbReference type="PANTHER" id="PTHR31689:SF0">
    <property type="entry name" value="DIAMINOPIMELATE EPIMERASE"/>
    <property type="match status" value="1"/>
</dbReference>
<dbReference type="PANTHER" id="PTHR31689">
    <property type="entry name" value="DIAMINOPIMELATE EPIMERASE, CHLOROPLASTIC"/>
    <property type="match status" value="1"/>
</dbReference>
<dbReference type="Pfam" id="PF01678">
    <property type="entry name" value="DAP_epimerase"/>
    <property type="match status" value="2"/>
</dbReference>
<dbReference type="SUPFAM" id="SSF54506">
    <property type="entry name" value="Diaminopimelate epimerase-like"/>
    <property type="match status" value="2"/>
</dbReference>
<dbReference type="PROSITE" id="PS01326">
    <property type="entry name" value="DAP_EPIMERASE"/>
    <property type="match status" value="1"/>
</dbReference>
<name>DAPF_ZYMMO</name>
<organism>
    <name type="scientific">Zymomonas mobilis subsp. mobilis (strain ATCC 31821 / ZM4 / CP4)</name>
    <dbReference type="NCBI Taxonomy" id="264203"/>
    <lineage>
        <taxon>Bacteria</taxon>
        <taxon>Pseudomonadati</taxon>
        <taxon>Pseudomonadota</taxon>
        <taxon>Alphaproteobacteria</taxon>
        <taxon>Sphingomonadales</taxon>
        <taxon>Zymomonadaceae</taxon>
        <taxon>Zymomonas</taxon>
    </lineage>
</organism>
<protein>
    <recommendedName>
        <fullName evidence="1">Diaminopimelate epimerase</fullName>
        <shortName evidence="1">DAP epimerase</shortName>
        <ecNumber evidence="1">5.1.1.7</ecNumber>
    </recommendedName>
    <alternativeName>
        <fullName evidence="1">PLP-independent amino acid racemase</fullName>
    </alternativeName>
</protein>
<accession>Q5NNL4</accession>
<keyword id="KW-0028">Amino-acid biosynthesis</keyword>
<keyword id="KW-0963">Cytoplasm</keyword>
<keyword id="KW-0413">Isomerase</keyword>
<keyword id="KW-0457">Lysine biosynthesis</keyword>
<keyword id="KW-1185">Reference proteome</keyword>
<evidence type="ECO:0000255" key="1">
    <source>
        <dbReference type="HAMAP-Rule" id="MF_00197"/>
    </source>
</evidence>
<gene>
    <name evidence="1" type="primary">dapF</name>
    <name type="ordered locus">ZMO1072</name>
</gene>
<feature type="chain" id="PRO_1000011991" description="Diaminopimelate epimerase">
    <location>
        <begin position="1"/>
        <end position="269"/>
    </location>
</feature>
<feature type="active site" description="Proton donor" evidence="1">
    <location>
        <position position="74"/>
    </location>
</feature>
<feature type="active site" description="Proton acceptor" evidence="1">
    <location>
        <position position="209"/>
    </location>
</feature>
<feature type="binding site" evidence="1">
    <location>
        <position position="13"/>
    </location>
    <ligand>
        <name>substrate</name>
    </ligand>
</feature>
<feature type="binding site" evidence="1">
    <location>
        <position position="46"/>
    </location>
    <ligand>
        <name>substrate</name>
    </ligand>
</feature>
<feature type="binding site" evidence="1">
    <location>
        <position position="65"/>
    </location>
    <ligand>
        <name>substrate</name>
    </ligand>
</feature>
<feature type="binding site" evidence="1">
    <location>
        <begin position="75"/>
        <end position="76"/>
    </location>
    <ligand>
        <name>substrate</name>
    </ligand>
</feature>
<feature type="binding site" evidence="1">
    <location>
        <position position="149"/>
    </location>
    <ligand>
        <name>substrate</name>
    </ligand>
</feature>
<feature type="binding site" evidence="1">
    <location>
        <position position="182"/>
    </location>
    <ligand>
        <name>substrate</name>
    </ligand>
</feature>
<feature type="binding site" evidence="1">
    <location>
        <begin position="200"/>
        <end position="201"/>
    </location>
    <ligand>
        <name>substrate</name>
    </ligand>
</feature>
<feature type="binding site" evidence="1">
    <location>
        <begin position="210"/>
        <end position="211"/>
    </location>
    <ligand>
        <name>substrate</name>
    </ligand>
</feature>
<feature type="site" description="Could be important to modulate the pK values of the two catalytic cysteine residues" evidence="1">
    <location>
        <position position="151"/>
    </location>
</feature>
<feature type="site" description="Could be important to modulate the pK values of the two catalytic cysteine residues" evidence="1">
    <location>
        <position position="200"/>
    </location>
</feature>